<comment type="function">
    <text evidence="1">Involved in the maturation of specific proteins in the endoplasmic reticulum. May be required for maturation and transport of active lipoprotein lipase (LPL) through the secretory pathway (By similarity).</text>
</comment>
<comment type="subcellular location">
    <subcellularLocation>
        <location evidence="1">Endoplasmic reticulum membrane</location>
        <topology evidence="1">Multi-pass membrane protein</topology>
    </subcellularLocation>
</comment>
<comment type="similarity">
    <text evidence="4">Belongs to the lipase maturation factor family.</text>
</comment>
<proteinExistence type="evidence at protein level"/>
<keyword id="KW-0256">Endoplasmic reticulum</keyword>
<keyword id="KW-0325">Glycoprotein</keyword>
<keyword id="KW-0472">Membrane</keyword>
<keyword id="KW-1185">Reference proteome</keyword>
<keyword id="KW-0812">Transmembrane</keyword>
<keyword id="KW-1133">Transmembrane helix</keyword>
<sequence length="702" mass="79997">MASSRVPQQLFLQGVAAVYLFAFASLYTQIPGLYGPEGILPARRTLRPQGKGLWQQLWETPTLLWEAPRLGLDTAQGLDLLTLLGTVLALGALLLNSLRHPFVYLLLWVAYRSAYQVGQVFLYFQWDSLLLETGFLAILVAPLRGPSKHKILQGRLAGALPHEDLPFWLVRWLLFRLMFASGVVKLTSRCPTWWGLTALTYHYETQCLPTPAAWFAHHLPVWLHKLSVVATFLIEIAVPPLFFAPIRRLRLTAFYAQALLQVLIIITGNYNFFNLLTLVLTTALLDDRHLSAEPGLRCHKKMPTSWPKALLTALSLLLELTVYGLLAYGTVYYFGLEVDWQQHIILSKTTFTFHQFSQWLKTVTLPTVWLGTASLAWELLVVLWRWIQVQGWSRKFSAGIQLSVLGTATVALFLISLVPYSYVEPGTHGRLWTGAHRLFGSVEHLQLANSYGLFRRMTGVGGRPEVVLEGSYDGQHWTEIEFMYKPGNVSRPPPFLTPHQPRLDWQMWFAALGPHTHSPWFTGLVLRLLQGKEPVIRLVQSHVANYPFHERPPTYLRAQRYKYWFSKPGDQSRWWHRQWVEEFFPSVSLGDPTLETLLQQFGLKDKSPPRARSPSNGLAQTLNWVRTQLSPLEPPILLWGLFGAVVAIRVVQTLLAPRPLQSSKQTREEKRKQTSKKDSRAASEQAAANSNSRDSWAPRRKK</sequence>
<dbReference type="EMBL" id="AK084606">
    <property type="protein sequence ID" value="BAC39228.1"/>
    <property type="molecule type" value="mRNA"/>
</dbReference>
<dbReference type="EMBL" id="AK149916">
    <property type="protein sequence ID" value="BAE29164.1"/>
    <property type="molecule type" value="mRNA"/>
</dbReference>
<dbReference type="EMBL" id="AK149934">
    <property type="protein sequence ID" value="BAE29177.1"/>
    <property type="molecule type" value="mRNA"/>
</dbReference>
<dbReference type="EMBL" id="AK171488">
    <property type="protein sequence ID" value="BAE42488.1"/>
    <property type="molecule type" value="mRNA"/>
</dbReference>
<dbReference type="EMBL" id="BC079532">
    <property type="protein sequence ID" value="AAH79532.1"/>
    <property type="molecule type" value="mRNA"/>
</dbReference>
<dbReference type="CCDS" id="CCDS27746.1"/>
<dbReference type="RefSeq" id="NP_849250.1">
    <property type="nucleotide sequence ID" value="NM_178919.5"/>
</dbReference>
<dbReference type="BioGRID" id="222935">
    <property type="interactions" value="3"/>
</dbReference>
<dbReference type="FunCoup" id="Q8C3X8">
    <property type="interactions" value="774"/>
</dbReference>
<dbReference type="STRING" id="10090.ENSMUSP00000023283"/>
<dbReference type="GlyCosmos" id="Q8C3X8">
    <property type="glycosylation" value="1 site, No reported glycans"/>
</dbReference>
<dbReference type="GlyGen" id="Q8C3X8">
    <property type="glycosylation" value="1 site, 1 N-linked glycan (1 site)"/>
</dbReference>
<dbReference type="iPTMnet" id="Q8C3X8"/>
<dbReference type="PhosphoSitePlus" id="Q8C3X8"/>
<dbReference type="SwissPalm" id="Q8C3X8"/>
<dbReference type="jPOST" id="Q8C3X8"/>
<dbReference type="PaxDb" id="10090-ENSMUSP00000023283"/>
<dbReference type="PeptideAtlas" id="Q8C3X8"/>
<dbReference type="ProteomicsDB" id="290049"/>
<dbReference type="Pumba" id="Q8C3X8"/>
<dbReference type="Antibodypedia" id="28648">
    <property type="antibodies" value="120 antibodies from 20 providers"/>
</dbReference>
<dbReference type="Ensembl" id="ENSMUST00000023283.6">
    <property type="protein sequence ID" value="ENSMUSP00000023283.6"/>
    <property type="gene ID" value="ENSMUSG00000022614.9"/>
</dbReference>
<dbReference type="GeneID" id="105847"/>
<dbReference type="KEGG" id="mmu:105847"/>
<dbReference type="UCSC" id="uc007xgd.2">
    <property type="organism name" value="mouse"/>
</dbReference>
<dbReference type="AGR" id="MGI:2146015"/>
<dbReference type="CTD" id="91289"/>
<dbReference type="MGI" id="MGI:2146015">
    <property type="gene designation" value="Lmf2"/>
</dbReference>
<dbReference type="VEuPathDB" id="HostDB:ENSMUSG00000022614"/>
<dbReference type="eggNOG" id="ENOG502QTN6">
    <property type="taxonomic scope" value="Eukaryota"/>
</dbReference>
<dbReference type="GeneTree" id="ENSGT00530000063702"/>
<dbReference type="HOGENOM" id="CLU_020557_1_0_1"/>
<dbReference type="InParanoid" id="Q8C3X8"/>
<dbReference type="OMA" id="HYTPWSQ"/>
<dbReference type="OrthoDB" id="5988002at2759"/>
<dbReference type="PhylomeDB" id="Q8C3X8"/>
<dbReference type="TreeFam" id="TF314339"/>
<dbReference type="Reactome" id="R-MMU-8963889">
    <property type="pathway name" value="Assembly of active LPL and LIPC lipase complexes"/>
</dbReference>
<dbReference type="BioGRID-ORCS" id="105847">
    <property type="hits" value="2 hits in 78 CRISPR screens"/>
</dbReference>
<dbReference type="ChiTaRS" id="Lmf2">
    <property type="organism name" value="mouse"/>
</dbReference>
<dbReference type="PRO" id="PR:Q8C3X8"/>
<dbReference type="Proteomes" id="UP000000589">
    <property type="component" value="Chromosome 15"/>
</dbReference>
<dbReference type="RNAct" id="Q8C3X8">
    <property type="molecule type" value="protein"/>
</dbReference>
<dbReference type="Bgee" id="ENSMUSG00000022614">
    <property type="expression patterns" value="Expressed in humerus cartilage element and 210 other cell types or tissues"/>
</dbReference>
<dbReference type="ExpressionAtlas" id="Q8C3X8">
    <property type="expression patterns" value="baseline and differential"/>
</dbReference>
<dbReference type="GO" id="GO:0005789">
    <property type="term" value="C:endoplasmic reticulum membrane"/>
    <property type="evidence" value="ECO:0007669"/>
    <property type="project" value="UniProtKB-SubCell"/>
</dbReference>
<dbReference type="GO" id="GO:0051604">
    <property type="term" value="P:protein maturation"/>
    <property type="evidence" value="ECO:0007669"/>
    <property type="project" value="InterPro"/>
</dbReference>
<dbReference type="InterPro" id="IPR009613">
    <property type="entry name" value="LMF"/>
</dbReference>
<dbReference type="PANTHER" id="PTHR14463">
    <property type="entry name" value="LIPASE MATURATION FACTOR"/>
    <property type="match status" value="1"/>
</dbReference>
<dbReference type="PANTHER" id="PTHR14463:SF5">
    <property type="entry name" value="LIPASE MATURATION FACTOR 2"/>
    <property type="match status" value="1"/>
</dbReference>
<dbReference type="Pfam" id="PF06762">
    <property type="entry name" value="LMF1"/>
    <property type="match status" value="1"/>
</dbReference>
<dbReference type="Pfam" id="PF25179">
    <property type="entry name" value="LMF1_C"/>
    <property type="match status" value="1"/>
</dbReference>
<organism>
    <name type="scientific">Mus musculus</name>
    <name type="common">Mouse</name>
    <dbReference type="NCBI Taxonomy" id="10090"/>
    <lineage>
        <taxon>Eukaryota</taxon>
        <taxon>Metazoa</taxon>
        <taxon>Chordata</taxon>
        <taxon>Craniata</taxon>
        <taxon>Vertebrata</taxon>
        <taxon>Euteleostomi</taxon>
        <taxon>Mammalia</taxon>
        <taxon>Eutheria</taxon>
        <taxon>Euarchontoglires</taxon>
        <taxon>Glires</taxon>
        <taxon>Rodentia</taxon>
        <taxon>Myomorpha</taxon>
        <taxon>Muroidea</taxon>
        <taxon>Muridae</taxon>
        <taxon>Murinae</taxon>
        <taxon>Mus</taxon>
        <taxon>Mus</taxon>
    </lineage>
</organism>
<protein>
    <recommendedName>
        <fullName>Lipase maturation factor 2</fullName>
    </recommendedName>
    <alternativeName>
        <fullName>Transmembrane protein 112B</fullName>
    </alternativeName>
    <alternativeName>
        <fullName>Transmembrane protein 153</fullName>
    </alternativeName>
</protein>
<feature type="chain" id="PRO_0000324511" description="Lipase maturation factor 2">
    <location>
        <begin position="1"/>
        <end position="702"/>
    </location>
</feature>
<feature type="transmembrane region" description="Helical" evidence="2">
    <location>
        <begin position="10"/>
        <end position="30"/>
    </location>
</feature>
<feature type="transmembrane region" description="Helical" evidence="2">
    <location>
        <begin position="75"/>
        <end position="95"/>
    </location>
</feature>
<feature type="transmembrane region" description="Helical" evidence="2">
    <location>
        <begin position="164"/>
        <end position="184"/>
    </location>
</feature>
<feature type="transmembrane region" description="Helical" evidence="2">
    <location>
        <begin position="226"/>
        <end position="246"/>
    </location>
</feature>
<feature type="transmembrane region" description="Helical" evidence="2">
    <location>
        <begin position="259"/>
        <end position="279"/>
    </location>
</feature>
<feature type="transmembrane region" description="Helical" evidence="2">
    <location>
        <begin position="316"/>
        <end position="336"/>
    </location>
</feature>
<feature type="transmembrane region" description="Helical" evidence="2">
    <location>
        <begin position="363"/>
        <end position="383"/>
    </location>
</feature>
<feature type="transmembrane region" description="Helical" evidence="2">
    <location>
        <begin position="398"/>
        <end position="418"/>
    </location>
</feature>
<feature type="transmembrane region" description="Helical" evidence="2">
    <location>
        <begin position="636"/>
        <end position="656"/>
    </location>
</feature>
<feature type="region of interest" description="Disordered" evidence="3">
    <location>
        <begin position="660"/>
        <end position="702"/>
    </location>
</feature>
<feature type="compositionally biased region" description="Basic and acidic residues" evidence="3">
    <location>
        <begin position="665"/>
        <end position="681"/>
    </location>
</feature>
<feature type="compositionally biased region" description="Low complexity" evidence="3">
    <location>
        <begin position="682"/>
        <end position="693"/>
    </location>
</feature>
<feature type="glycosylation site" description="N-linked (GlcNAc...) asparagine" evidence="2">
    <location>
        <position position="488"/>
    </location>
</feature>
<name>LMF2_MOUSE</name>
<evidence type="ECO:0000250" key="1"/>
<evidence type="ECO:0000255" key="2"/>
<evidence type="ECO:0000256" key="3">
    <source>
        <dbReference type="SAM" id="MobiDB-lite"/>
    </source>
</evidence>
<evidence type="ECO:0000305" key="4"/>
<accession>Q8C3X8</accession>
<reference key="1">
    <citation type="journal article" date="2005" name="Science">
        <title>The transcriptional landscape of the mammalian genome.</title>
        <authorList>
            <person name="Carninci P."/>
            <person name="Kasukawa T."/>
            <person name="Katayama S."/>
            <person name="Gough J."/>
            <person name="Frith M.C."/>
            <person name="Maeda N."/>
            <person name="Oyama R."/>
            <person name="Ravasi T."/>
            <person name="Lenhard B."/>
            <person name="Wells C."/>
            <person name="Kodzius R."/>
            <person name="Shimokawa K."/>
            <person name="Bajic V.B."/>
            <person name="Brenner S.E."/>
            <person name="Batalov S."/>
            <person name="Forrest A.R."/>
            <person name="Zavolan M."/>
            <person name="Davis M.J."/>
            <person name="Wilming L.G."/>
            <person name="Aidinis V."/>
            <person name="Allen J.E."/>
            <person name="Ambesi-Impiombato A."/>
            <person name="Apweiler R."/>
            <person name="Aturaliya R.N."/>
            <person name="Bailey T.L."/>
            <person name="Bansal M."/>
            <person name="Baxter L."/>
            <person name="Beisel K.W."/>
            <person name="Bersano T."/>
            <person name="Bono H."/>
            <person name="Chalk A.M."/>
            <person name="Chiu K.P."/>
            <person name="Choudhary V."/>
            <person name="Christoffels A."/>
            <person name="Clutterbuck D.R."/>
            <person name="Crowe M.L."/>
            <person name="Dalla E."/>
            <person name="Dalrymple B.P."/>
            <person name="de Bono B."/>
            <person name="Della Gatta G."/>
            <person name="di Bernardo D."/>
            <person name="Down T."/>
            <person name="Engstrom P."/>
            <person name="Fagiolini M."/>
            <person name="Faulkner G."/>
            <person name="Fletcher C.F."/>
            <person name="Fukushima T."/>
            <person name="Furuno M."/>
            <person name="Futaki S."/>
            <person name="Gariboldi M."/>
            <person name="Georgii-Hemming P."/>
            <person name="Gingeras T.R."/>
            <person name="Gojobori T."/>
            <person name="Green R.E."/>
            <person name="Gustincich S."/>
            <person name="Harbers M."/>
            <person name="Hayashi Y."/>
            <person name="Hensch T.K."/>
            <person name="Hirokawa N."/>
            <person name="Hill D."/>
            <person name="Huminiecki L."/>
            <person name="Iacono M."/>
            <person name="Ikeo K."/>
            <person name="Iwama A."/>
            <person name="Ishikawa T."/>
            <person name="Jakt M."/>
            <person name="Kanapin A."/>
            <person name="Katoh M."/>
            <person name="Kawasawa Y."/>
            <person name="Kelso J."/>
            <person name="Kitamura H."/>
            <person name="Kitano H."/>
            <person name="Kollias G."/>
            <person name="Krishnan S.P."/>
            <person name="Kruger A."/>
            <person name="Kummerfeld S.K."/>
            <person name="Kurochkin I.V."/>
            <person name="Lareau L.F."/>
            <person name="Lazarevic D."/>
            <person name="Lipovich L."/>
            <person name="Liu J."/>
            <person name="Liuni S."/>
            <person name="McWilliam S."/>
            <person name="Madan Babu M."/>
            <person name="Madera M."/>
            <person name="Marchionni L."/>
            <person name="Matsuda H."/>
            <person name="Matsuzawa S."/>
            <person name="Miki H."/>
            <person name="Mignone F."/>
            <person name="Miyake S."/>
            <person name="Morris K."/>
            <person name="Mottagui-Tabar S."/>
            <person name="Mulder N."/>
            <person name="Nakano N."/>
            <person name="Nakauchi H."/>
            <person name="Ng P."/>
            <person name="Nilsson R."/>
            <person name="Nishiguchi S."/>
            <person name="Nishikawa S."/>
            <person name="Nori F."/>
            <person name="Ohara O."/>
            <person name="Okazaki Y."/>
            <person name="Orlando V."/>
            <person name="Pang K.C."/>
            <person name="Pavan W.J."/>
            <person name="Pavesi G."/>
            <person name="Pesole G."/>
            <person name="Petrovsky N."/>
            <person name="Piazza S."/>
            <person name="Reed J."/>
            <person name="Reid J.F."/>
            <person name="Ring B.Z."/>
            <person name="Ringwald M."/>
            <person name="Rost B."/>
            <person name="Ruan Y."/>
            <person name="Salzberg S.L."/>
            <person name="Sandelin A."/>
            <person name="Schneider C."/>
            <person name="Schoenbach C."/>
            <person name="Sekiguchi K."/>
            <person name="Semple C.A."/>
            <person name="Seno S."/>
            <person name="Sessa L."/>
            <person name="Sheng Y."/>
            <person name="Shibata Y."/>
            <person name="Shimada H."/>
            <person name="Shimada K."/>
            <person name="Silva D."/>
            <person name="Sinclair B."/>
            <person name="Sperling S."/>
            <person name="Stupka E."/>
            <person name="Sugiura K."/>
            <person name="Sultana R."/>
            <person name="Takenaka Y."/>
            <person name="Taki K."/>
            <person name="Tammoja K."/>
            <person name="Tan S.L."/>
            <person name="Tang S."/>
            <person name="Taylor M.S."/>
            <person name="Tegner J."/>
            <person name="Teichmann S.A."/>
            <person name="Ueda H.R."/>
            <person name="van Nimwegen E."/>
            <person name="Verardo R."/>
            <person name="Wei C.L."/>
            <person name="Yagi K."/>
            <person name="Yamanishi H."/>
            <person name="Zabarovsky E."/>
            <person name="Zhu S."/>
            <person name="Zimmer A."/>
            <person name="Hide W."/>
            <person name="Bult C."/>
            <person name="Grimmond S.M."/>
            <person name="Teasdale R.D."/>
            <person name="Liu E.T."/>
            <person name="Brusic V."/>
            <person name="Quackenbush J."/>
            <person name="Wahlestedt C."/>
            <person name="Mattick J.S."/>
            <person name="Hume D.A."/>
            <person name="Kai C."/>
            <person name="Sasaki D."/>
            <person name="Tomaru Y."/>
            <person name="Fukuda S."/>
            <person name="Kanamori-Katayama M."/>
            <person name="Suzuki M."/>
            <person name="Aoki J."/>
            <person name="Arakawa T."/>
            <person name="Iida J."/>
            <person name="Imamura K."/>
            <person name="Itoh M."/>
            <person name="Kato T."/>
            <person name="Kawaji H."/>
            <person name="Kawagashira N."/>
            <person name="Kawashima T."/>
            <person name="Kojima M."/>
            <person name="Kondo S."/>
            <person name="Konno H."/>
            <person name="Nakano K."/>
            <person name="Ninomiya N."/>
            <person name="Nishio T."/>
            <person name="Okada M."/>
            <person name="Plessy C."/>
            <person name="Shibata K."/>
            <person name="Shiraki T."/>
            <person name="Suzuki S."/>
            <person name="Tagami M."/>
            <person name="Waki K."/>
            <person name="Watahiki A."/>
            <person name="Okamura-Oho Y."/>
            <person name="Suzuki H."/>
            <person name="Kawai J."/>
            <person name="Hayashizaki Y."/>
        </authorList>
    </citation>
    <scope>NUCLEOTIDE SEQUENCE [LARGE SCALE MRNA]</scope>
    <source>
        <strain>C57BL/6J</strain>
        <tissue>Bone marrow</tissue>
        <tissue>Heart</tissue>
    </source>
</reference>
<reference key="2">
    <citation type="journal article" date="2004" name="Genome Res.">
        <title>The status, quality, and expansion of the NIH full-length cDNA project: the Mammalian Gene Collection (MGC).</title>
        <authorList>
            <consortium name="The MGC Project Team"/>
        </authorList>
    </citation>
    <scope>NUCLEOTIDE SEQUENCE [LARGE SCALE MRNA]</scope>
    <source>
        <strain>C57BL/6J</strain>
        <tissue>Brain</tissue>
    </source>
</reference>
<reference key="3">
    <citation type="journal article" date="2010" name="Cell">
        <title>A tissue-specific atlas of mouse protein phosphorylation and expression.</title>
        <authorList>
            <person name="Huttlin E.L."/>
            <person name="Jedrychowski M.P."/>
            <person name="Elias J.E."/>
            <person name="Goswami T."/>
            <person name="Rad R."/>
            <person name="Beausoleil S.A."/>
            <person name="Villen J."/>
            <person name="Haas W."/>
            <person name="Sowa M.E."/>
            <person name="Gygi S.P."/>
        </authorList>
    </citation>
    <scope>IDENTIFICATION BY MASS SPECTROMETRY [LARGE SCALE ANALYSIS]</scope>
    <source>
        <tissue>Brown adipose tissue</tissue>
        <tissue>Heart</tissue>
        <tissue>Kidney</tissue>
        <tissue>Liver</tissue>
        <tissue>Lung</tissue>
        <tissue>Pancreas</tissue>
        <tissue>Spleen</tissue>
        <tissue>Testis</tissue>
    </source>
</reference>
<gene>
    <name type="primary">Lmf2</name>
    <name type="synonym">Tmem112b</name>
    <name type="synonym">Tmem153</name>
</gene>